<organism>
    <name type="scientific">Aromatoleum aromaticum (strain DSM 19018 / LMG 30748 / EbN1)</name>
    <name type="common">Azoarcus sp. (strain EbN1)</name>
    <dbReference type="NCBI Taxonomy" id="76114"/>
    <lineage>
        <taxon>Bacteria</taxon>
        <taxon>Pseudomonadati</taxon>
        <taxon>Pseudomonadota</taxon>
        <taxon>Betaproteobacteria</taxon>
        <taxon>Rhodocyclales</taxon>
        <taxon>Rhodocyclaceae</taxon>
        <taxon>Aromatoleum</taxon>
    </lineage>
</organism>
<feature type="chain" id="PRO_1000023872" description="Uroporphyrinogen decarboxylase">
    <location>
        <begin position="1"/>
        <end position="356"/>
    </location>
</feature>
<feature type="binding site" evidence="1">
    <location>
        <begin position="27"/>
        <end position="31"/>
    </location>
    <ligand>
        <name>substrate</name>
    </ligand>
</feature>
<feature type="binding site" evidence="1">
    <location>
        <position position="77"/>
    </location>
    <ligand>
        <name>substrate</name>
    </ligand>
</feature>
<feature type="binding site" evidence="1">
    <location>
        <position position="154"/>
    </location>
    <ligand>
        <name>substrate</name>
    </ligand>
</feature>
<feature type="binding site" evidence="1">
    <location>
        <position position="209"/>
    </location>
    <ligand>
        <name>substrate</name>
    </ligand>
</feature>
<feature type="binding site" evidence="1">
    <location>
        <position position="327"/>
    </location>
    <ligand>
        <name>substrate</name>
    </ligand>
</feature>
<feature type="site" description="Transition state stabilizer" evidence="1">
    <location>
        <position position="77"/>
    </location>
</feature>
<name>DCUP_AROAE</name>
<dbReference type="EC" id="4.1.1.37" evidence="1"/>
<dbReference type="EMBL" id="CR555306">
    <property type="protein sequence ID" value="CAI07708.1"/>
    <property type="molecule type" value="Genomic_DNA"/>
</dbReference>
<dbReference type="RefSeq" id="WP_011237423.1">
    <property type="nucleotide sequence ID" value="NC_006513.1"/>
</dbReference>
<dbReference type="SMR" id="Q5P4Q4"/>
<dbReference type="STRING" id="76114.ebA2822"/>
<dbReference type="KEGG" id="eba:ebA2822"/>
<dbReference type="eggNOG" id="COG0407">
    <property type="taxonomic scope" value="Bacteria"/>
</dbReference>
<dbReference type="HOGENOM" id="CLU_040933_0_0_4"/>
<dbReference type="OrthoDB" id="9806656at2"/>
<dbReference type="UniPathway" id="UPA00251">
    <property type="reaction ID" value="UER00321"/>
</dbReference>
<dbReference type="Proteomes" id="UP000006552">
    <property type="component" value="Chromosome"/>
</dbReference>
<dbReference type="GO" id="GO:0005829">
    <property type="term" value="C:cytosol"/>
    <property type="evidence" value="ECO:0007669"/>
    <property type="project" value="TreeGrafter"/>
</dbReference>
<dbReference type="GO" id="GO:0004853">
    <property type="term" value="F:uroporphyrinogen decarboxylase activity"/>
    <property type="evidence" value="ECO:0007669"/>
    <property type="project" value="UniProtKB-UniRule"/>
</dbReference>
<dbReference type="GO" id="GO:0019353">
    <property type="term" value="P:protoporphyrinogen IX biosynthetic process from glutamate"/>
    <property type="evidence" value="ECO:0007669"/>
    <property type="project" value="TreeGrafter"/>
</dbReference>
<dbReference type="CDD" id="cd00717">
    <property type="entry name" value="URO-D"/>
    <property type="match status" value="1"/>
</dbReference>
<dbReference type="FunFam" id="3.20.20.210:FF:000001">
    <property type="entry name" value="Uroporphyrinogen decarboxylase"/>
    <property type="match status" value="1"/>
</dbReference>
<dbReference type="Gene3D" id="3.20.20.210">
    <property type="match status" value="1"/>
</dbReference>
<dbReference type="HAMAP" id="MF_00218">
    <property type="entry name" value="URO_D"/>
    <property type="match status" value="1"/>
</dbReference>
<dbReference type="InterPro" id="IPR038071">
    <property type="entry name" value="UROD/MetE-like_sf"/>
</dbReference>
<dbReference type="InterPro" id="IPR006361">
    <property type="entry name" value="Uroporphyrinogen_deCO2ase_HemE"/>
</dbReference>
<dbReference type="InterPro" id="IPR000257">
    <property type="entry name" value="Uroporphyrinogen_deCOase"/>
</dbReference>
<dbReference type="NCBIfam" id="TIGR01464">
    <property type="entry name" value="hemE"/>
    <property type="match status" value="1"/>
</dbReference>
<dbReference type="PANTHER" id="PTHR21091">
    <property type="entry name" value="METHYLTETRAHYDROFOLATE:HOMOCYSTEINE METHYLTRANSFERASE RELATED"/>
    <property type="match status" value="1"/>
</dbReference>
<dbReference type="PANTHER" id="PTHR21091:SF169">
    <property type="entry name" value="UROPORPHYRINOGEN DECARBOXYLASE"/>
    <property type="match status" value="1"/>
</dbReference>
<dbReference type="Pfam" id="PF01208">
    <property type="entry name" value="URO-D"/>
    <property type="match status" value="1"/>
</dbReference>
<dbReference type="SUPFAM" id="SSF51726">
    <property type="entry name" value="UROD/MetE-like"/>
    <property type="match status" value="1"/>
</dbReference>
<dbReference type="PROSITE" id="PS00906">
    <property type="entry name" value="UROD_1"/>
    <property type="match status" value="1"/>
</dbReference>
<dbReference type="PROSITE" id="PS00907">
    <property type="entry name" value="UROD_2"/>
    <property type="match status" value="1"/>
</dbReference>
<protein>
    <recommendedName>
        <fullName evidence="1">Uroporphyrinogen decarboxylase</fullName>
        <shortName evidence="1">UPD</shortName>
        <shortName evidence="1">URO-D</shortName>
        <ecNumber evidence="1">4.1.1.37</ecNumber>
    </recommendedName>
</protein>
<keyword id="KW-0963">Cytoplasm</keyword>
<keyword id="KW-0210">Decarboxylase</keyword>
<keyword id="KW-0456">Lyase</keyword>
<keyword id="KW-0627">Porphyrin biosynthesis</keyword>
<keyword id="KW-1185">Reference proteome</keyword>
<reference key="1">
    <citation type="journal article" date="2005" name="Arch. Microbiol.">
        <title>The genome sequence of an anaerobic aromatic-degrading denitrifying bacterium, strain EbN1.</title>
        <authorList>
            <person name="Rabus R."/>
            <person name="Kube M."/>
            <person name="Heider J."/>
            <person name="Beck A."/>
            <person name="Heitmann K."/>
            <person name="Widdel F."/>
            <person name="Reinhardt R."/>
        </authorList>
    </citation>
    <scope>NUCLEOTIDE SEQUENCE [LARGE SCALE GENOMIC DNA]</scope>
    <source>
        <strain>DSM 19018 / LMG 30748 / EbN1</strain>
    </source>
</reference>
<accession>Q5P4Q4</accession>
<sequence length="356" mass="39300">MSRLQNDTFLRALLRQPTDYTPLWMMRQAGRYLPEYCETRRRAGSFLDLCKSPALACEVTLQPLARYDLDAAILFSDILTVPDAMGLGLYFAEGEGPRFERPLRDEWEIRNLVAPDPHAELQYVMDAVAEIRRALGGSVPLIGFSGSPWTLACYMVEGGSSDDYRRIKTMAYTRPDLLHHVLRVTADSVVAYLNAQIESGAQAVMVFDSWGGVLSEAAYREFSLPYLERVVAGLIRERDGERIPSIVFTKGGGLWLESIAAIGCDAVGLDWTMDIGRARALVGDKVALQGNLDPAILFAPPETIATEAKRVLDAFGPHPGHVFNLGHGISQFTPPEAVSVLVDTVHQHSRKLRGGR</sequence>
<evidence type="ECO:0000255" key="1">
    <source>
        <dbReference type="HAMAP-Rule" id="MF_00218"/>
    </source>
</evidence>
<proteinExistence type="inferred from homology"/>
<comment type="function">
    <text evidence="1">Catalyzes the decarboxylation of four acetate groups of uroporphyrinogen-III to yield coproporphyrinogen-III.</text>
</comment>
<comment type="catalytic activity">
    <reaction evidence="1">
        <text>uroporphyrinogen III + 4 H(+) = coproporphyrinogen III + 4 CO2</text>
        <dbReference type="Rhea" id="RHEA:19865"/>
        <dbReference type="ChEBI" id="CHEBI:15378"/>
        <dbReference type="ChEBI" id="CHEBI:16526"/>
        <dbReference type="ChEBI" id="CHEBI:57308"/>
        <dbReference type="ChEBI" id="CHEBI:57309"/>
        <dbReference type="EC" id="4.1.1.37"/>
    </reaction>
</comment>
<comment type="pathway">
    <text evidence="1">Porphyrin-containing compound metabolism; protoporphyrin-IX biosynthesis; coproporphyrinogen-III from 5-aminolevulinate: step 4/4.</text>
</comment>
<comment type="subunit">
    <text evidence="1">Homodimer.</text>
</comment>
<comment type="subcellular location">
    <subcellularLocation>
        <location evidence="1">Cytoplasm</location>
    </subcellularLocation>
</comment>
<comment type="similarity">
    <text evidence="1">Belongs to the uroporphyrinogen decarboxylase family.</text>
</comment>
<gene>
    <name evidence="1" type="primary">hemE</name>
    <name type="ordered locus">AZOSEA15830</name>
    <name type="ORF">ebA2822</name>
</gene>